<gene>
    <name evidence="1" type="primary">rpoE</name>
    <name type="ordered locus">SPP_0516</name>
</gene>
<proteinExistence type="inferred from homology"/>
<sequence>MELEVFAGQEKSELSMIEVARAILELRGRDHEMHFSDLVNEIQNYLGTSNSDIREALPLFYTELNFDGSFISLGDNKWGLRSWYGVDEIDEEIIALEENDDDEVAPKAKKKRVNAFMDGDSDAIDYNADDPEDEDAYEADPALSYDDENPDDEKNEVEAYDAEINEIAPDDLGEDVDLNEDDDEFSDDDAETSEE</sequence>
<protein>
    <recommendedName>
        <fullName evidence="1">Probable DNA-directed RNA polymerase subunit delta</fullName>
    </recommendedName>
    <alternativeName>
        <fullName evidence="1">RNAP delta factor</fullName>
    </alternativeName>
</protein>
<organism>
    <name type="scientific">Streptococcus pneumoniae (strain P1031)</name>
    <dbReference type="NCBI Taxonomy" id="488223"/>
    <lineage>
        <taxon>Bacteria</taxon>
        <taxon>Bacillati</taxon>
        <taxon>Bacillota</taxon>
        <taxon>Bacilli</taxon>
        <taxon>Lactobacillales</taxon>
        <taxon>Streptococcaceae</taxon>
        <taxon>Streptococcus</taxon>
    </lineage>
</organism>
<feature type="chain" id="PRO_1000133454" description="Probable DNA-directed RNA polymerase subunit delta">
    <location>
        <begin position="1"/>
        <end position="195"/>
    </location>
</feature>
<feature type="domain" description="HTH HARE-type" evidence="2">
    <location>
        <begin position="14"/>
        <end position="83"/>
    </location>
</feature>
<feature type="region of interest" description="Disordered" evidence="3">
    <location>
        <begin position="120"/>
        <end position="195"/>
    </location>
</feature>
<feature type="compositionally biased region" description="Acidic residues" evidence="3">
    <location>
        <begin position="120"/>
        <end position="138"/>
    </location>
</feature>
<feature type="compositionally biased region" description="Acidic residues" evidence="3">
    <location>
        <begin position="145"/>
        <end position="195"/>
    </location>
</feature>
<keyword id="KW-0240">DNA-directed RNA polymerase</keyword>
<keyword id="KW-0548">Nucleotidyltransferase</keyword>
<keyword id="KW-0804">Transcription</keyword>
<keyword id="KW-0808">Transferase</keyword>
<dbReference type="EMBL" id="CP000920">
    <property type="protein sequence ID" value="ACO21779.1"/>
    <property type="molecule type" value="Genomic_DNA"/>
</dbReference>
<dbReference type="RefSeq" id="WP_000418402.1">
    <property type="nucleotide sequence ID" value="NC_012467.1"/>
</dbReference>
<dbReference type="SMR" id="C1CIY6"/>
<dbReference type="GeneID" id="45652070"/>
<dbReference type="KEGG" id="spp:SPP_0516"/>
<dbReference type="HOGENOM" id="CLU_116648_0_0_9"/>
<dbReference type="GO" id="GO:0000428">
    <property type="term" value="C:DNA-directed RNA polymerase complex"/>
    <property type="evidence" value="ECO:0007669"/>
    <property type="project" value="UniProtKB-KW"/>
</dbReference>
<dbReference type="GO" id="GO:0003899">
    <property type="term" value="F:DNA-directed RNA polymerase activity"/>
    <property type="evidence" value="ECO:0007669"/>
    <property type="project" value="UniProtKB-UniRule"/>
</dbReference>
<dbReference type="GO" id="GO:0006351">
    <property type="term" value="P:DNA-templated transcription"/>
    <property type="evidence" value="ECO:0007669"/>
    <property type="project" value="InterPro"/>
</dbReference>
<dbReference type="GO" id="GO:0006355">
    <property type="term" value="P:regulation of DNA-templated transcription"/>
    <property type="evidence" value="ECO:0007669"/>
    <property type="project" value="UniProtKB-UniRule"/>
</dbReference>
<dbReference type="Gene3D" id="1.10.10.1250">
    <property type="entry name" value="RNA polymerase, subunit delta, N-terminal domain"/>
    <property type="match status" value="1"/>
</dbReference>
<dbReference type="HAMAP" id="MF_00357">
    <property type="entry name" value="RNApol_bact_RpoE"/>
    <property type="match status" value="1"/>
</dbReference>
<dbReference type="InterPro" id="IPR007759">
    <property type="entry name" value="Asxl_HARE-HTH"/>
</dbReference>
<dbReference type="InterPro" id="IPR038087">
    <property type="entry name" value="RNAP_delta_N_dom_sf"/>
</dbReference>
<dbReference type="InterPro" id="IPR029757">
    <property type="entry name" value="RpoE"/>
</dbReference>
<dbReference type="NCBIfam" id="TIGR04567">
    <property type="entry name" value="RNAP_delt_lowGC"/>
    <property type="match status" value="1"/>
</dbReference>
<dbReference type="Pfam" id="PF05066">
    <property type="entry name" value="HARE-HTH"/>
    <property type="match status" value="1"/>
</dbReference>
<dbReference type="PROSITE" id="PS51913">
    <property type="entry name" value="HTH_HARE"/>
    <property type="match status" value="1"/>
</dbReference>
<evidence type="ECO:0000255" key="1">
    <source>
        <dbReference type="HAMAP-Rule" id="MF_00357"/>
    </source>
</evidence>
<evidence type="ECO:0000255" key="2">
    <source>
        <dbReference type="PROSITE-ProRule" id="PRU01261"/>
    </source>
</evidence>
<evidence type="ECO:0000256" key="3">
    <source>
        <dbReference type="SAM" id="MobiDB-lite"/>
    </source>
</evidence>
<name>RPOE_STRZP</name>
<accession>C1CIY6</accession>
<comment type="function">
    <text evidence="1">Participates in both the initiation and recycling phases of transcription. In the presence of the delta subunit, RNAP displays an increased specificity of transcription, a decreased affinity for nucleic acids, and an increased efficiency of RNA synthesis because of enhanced recycling.</text>
</comment>
<comment type="subunit">
    <text evidence="1">RNAP is composed of a core of 2 alpha, a beta and a beta' subunits. The core is associated with a delta subunit and one of several sigma factors.</text>
</comment>
<comment type="similarity">
    <text evidence="1">Belongs to the RpoE family.</text>
</comment>
<reference key="1">
    <citation type="journal article" date="2010" name="Genome Biol.">
        <title>Structure and dynamics of the pan-genome of Streptococcus pneumoniae and closely related species.</title>
        <authorList>
            <person name="Donati C."/>
            <person name="Hiller N.L."/>
            <person name="Tettelin H."/>
            <person name="Muzzi A."/>
            <person name="Croucher N.J."/>
            <person name="Angiuoli S.V."/>
            <person name="Oggioni M."/>
            <person name="Dunning Hotopp J.C."/>
            <person name="Hu F.Z."/>
            <person name="Riley D.R."/>
            <person name="Covacci A."/>
            <person name="Mitchell T.J."/>
            <person name="Bentley S.D."/>
            <person name="Kilian M."/>
            <person name="Ehrlich G.D."/>
            <person name="Rappuoli R."/>
            <person name="Moxon E.R."/>
            <person name="Masignani V."/>
        </authorList>
    </citation>
    <scope>NUCLEOTIDE SEQUENCE [LARGE SCALE GENOMIC DNA]</scope>
    <source>
        <strain>P1031</strain>
    </source>
</reference>